<sequence>MFDLARQTRIILLLGIDVTFFFIEIITGYAIDSLALIADSFHMLNDIVSLLVALWATRLAHSTSHEPKYTYGWQRAEILGALSNGVFLIALCMFIFMEAIERFIEPPSVSNPTLMFFVGSLGLLSNFVGIFLFHDHGHDHPHTHTAQNYDFPEEDDIESVLPSTIVHRCNTSQQEVSHTHTQVADSATESSPLLSYTGNHNGAGTSKPVNNHGSIEQDAPKQTKKRNLNMHGVFLHVLGDALGNIGVISAALFIKYTDYSWRFLFDPCISILLTFIILFSAIPLCKSAALILLQVAPQSIKLDDVSNLINHLDGVESVHELHIWQLSDVKLIATVHVCVTLPDDKGESYTKLTTDIRNVLQSFGIYDVTIQPEFANHPLLCDQGSSS</sequence>
<protein>
    <recommendedName>
        <fullName>Zinc homeostasis factor 1</fullName>
    </recommendedName>
</protein>
<dbReference type="EMBL" id="D89236">
    <property type="protein sequence ID" value="BAA13897.1"/>
    <property type="molecule type" value="mRNA"/>
</dbReference>
<dbReference type="EMBL" id="CU329670">
    <property type="protein sequence ID" value="CAB11166.1"/>
    <property type="molecule type" value="Genomic_DNA"/>
</dbReference>
<dbReference type="PIR" id="T38252">
    <property type="entry name" value="T38252"/>
</dbReference>
<dbReference type="PIR" id="T43140">
    <property type="entry name" value="T43140"/>
</dbReference>
<dbReference type="RefSeq" id="NP_593645.1">
    <property type="nucleotide sequence ID" value="NM_001019076.2"/>
</dbReference>
<dbReference type="SMR" id="O13918"/>
<dbReference type="BioGRID" id="278538">
    <property type="interactions" value="24"/>
</dbReference>
<dbReference type="FunCoup" id="O13918">
    <property type="interactions" value="120"/>
</dbReference>
<dbReference type="STRING" id="284812.O13918"/>
<dbReference type="iPTMnet" id="O13918"/>
<dbReference type="PaxDb" id="4896-SPAC23C11.14.1"/>
<dbReference type="EnsemblFungi" id="SPAC23C11.14.1">
    <property type="protein sequence ID" value="SPAC23C11.14.1:pep"/>
    <property type="gene ID" value="SPAC23C11.14"/>
</dbReference>
<dbReference type="GeneID" id="2542060"/>
<dbReference type="KEGG" id="spo:2542060"/>
<dbReference type="PomBase" id="SPAC23C11.14">
    <property type="gene designation" value="zhf1"/>
</dbReference>
<dbReference type="VEuPathDB" id="FungiDB:SPAC23C11.14"/>
<dbReference type="eggNOG" id="KOG1483">
    <property type="taxonomic scope" value="Eukaryota"/>
</dbReference>
<dbReference type="HOGENOM" id="CLU_013430_4_3_1"/>
<dbReference type="InParanoid" id="O13918"/>
<dbReference type="OMA" id="FQDCASW"/>
<dbReference type="PhylomeDB" id="O13918"/>
<dbReference type="Reactome" id="R-SPO-425410">
    <property type="pathway name" value="Metal ion SLC transporters"/>
</dbReference>
<dbReference type="Reactome" id="R-SPO-435368">
    <property type="pathway name" value="Zinc efflux and compartmentalization by the SLC30 family"/>
</dbReference>
<dbReference type="PRO" id="PR:O13918"/>
<dbReference type="Proteomes" id="UP000002485">
    <property type="component" value="Chromosome I"/>
</dbReference>
<dbReference type="GO" id="GO:0005789">
    <property type="term" value="C:endoplasmic reticulum membrane"/>
    <property type="evidence" value="ECO:0000314"/>
    <property type="project" value="PomBase"/>
</dbReference>
<dbReference type="GO" id="GO:0000329">
    <property type="term" value="C:fungal-type vacuole membrane"/>
    <property type="evidence" value="ECO:0000314"/>
    <property type="project" value="PomBase"/>
</dbReference>
<dbReference type="GO" id="GO:0016020">
    <property type="term" value="C:membrane"/>
    <property type="evidence" value="ECO:0000318"/>
    <property type="project" value="GO_Central"/>
</dbReference>
<dbReference type="GO" id="GO:0031965">
    <property type="term" value="C:nuclear membrane"/>
    <property type="evidence" value="ECO:0007669"/>
    <property type="project" value="UniProtKB-SubCell"/>
</dbReference>
<dbReference type="GO" id="GO:0140486">
    <property type="term" value="F:zinc ion sequestering activity"/>
    <property type="evidence" value="ECO:0000269"/>
    <property type="project" value="PomBase"/>
</dbReference>
<dbReference type="GO" id="GO:0005385">
    <property type="term" value="F:zinc ion transmembrane transporter activity"/>
    <property type="evidence" value="ECO:0000315"/>
    <property type="project" value="PomBase"/>
</dbReference>
<dbReference type="GO" id="GO:0010312">
    <property type="term" value="P:detoxification of zinc ion"/>
    <property type="evidence" value="ECO:0000269"/>
    <property type="project" value="PomBase"/>
</dbReference>
<dbReference type="GO" id="GO:0006882">
    <property type="term" value="P:intracellular zinc ion homeostasis"/>
    <property type="evidence" value="ECO:0000315"/>
    <property type="project" value="PomBase"/>
</dbReference>
<dbReference type="GO" id="GO:0140209">
    <property type="term" value="P:zinc ion import into endoplasmic reticulum"/>
    <property type="evidence" value="ECO:0000314"/>
    <property type="project" value="PomBase"/>
</dbReference>
<dbReference type="GO" id="GO:0071577">
    <property type="term" value="P:zinc ion transmembrane transport"/>
    <property type="evidence" value="ECO:0000318"/>
    <property type="project" value="GO_Central"/>
</dbReference>
<dbReference type="Gene3D" id="1.20.1510.10">
    <property type="entry name" value="Cation efflux protein transmembrane domain"/>
    <property type="match status" value="1"/>
</dbReference>
<dbReference type="InterPro" id="IPR002524">
    <property type="entry name" value="Cation_efflux"/>
</dbReference>
<dbReference type="InterPro" id="IPR036837">
    <property type="entry name" value="Cation_efflux_CTD_sf"/>
</dbReference>
<dbReference type="InterPro" id="IPR027469">
    <property type="entry name" value="Cation_efflux_TMD_sf"/>
</dbReference>
<dbReference type="NCBIfam" id="TIGR01297">
    <property type="entry name" value="CDF"/>
    <property type="match status" value="1"/>
</dbReference>
<dbReference type="PANTHER" id="PTHR45820">
    <property type="entry name" value="FI23527P1"/>
    <property type="match status" value="1"/>
</dbReference>
<dbReference type="PANTHER" id="PTHR45820:SF4">
    <property type="entry name" value="ZINC TRANSPORTER 63C, ISOFORM F"/>
    <property type="match status" value="1"/>
</dbReference>
<dbReference type="Pfam" id="PF01545">
    <property type="entry name" value="Cation_efflux"/>
    <property type="match status" value="1"/>
</dbReference>
<dbReference type="SUPFAM" id="SSF160240">
    <property type="entry name" value="Cation efflux protein cytoplasmic domain-like"/>
    <property type="match status" value="1"/>
</dbReference>
<dbReference type="SUPFAM" id="SSF161111">
    <property type="entry name" value="Cation efflux protein transmembrane domain-like"/>
    <property type="match status" value="1"/>
</dbReference>
<accession>O13918</accession>
<accession>P78885</accession>
<feature type="chain" id="PRO_0000206104" description="Zinc homeostasis factor 1">
    <location>
        <begin position="1"/>
        <end position="387"/>
    </location>
</feature>
<feature type="transmembrane region" description="Helical" evidence="1">
    <location>
        <begin position="10"/>
        <end position="30"/>
    </location>
</feature>
<feature type="transmembrane region" description="Helical" evidence="1">
    <location>
        <begin position="34"/>
        <end position="54"/>
    </location>
</feature>
<feature type="transmembrane region" description="Helical" evidence="1">
    <location>
        <begin position="77"/>
        <end position="97"/>
    </location>
</feature>
<feature type="transmembrane region" description="Helical" evidence="1">
    <location>
        <begin position="113"/>
        <end position="133"/>
    </location>
</feature>
<feature type="transmembrane region" description="Helical" evidence="1">
    <location>
        <begin position="234"/>
        <end position="254"/>
    </location>
</feature>
<feature type="transmembrane region" description="Helical" evidence="1">
    <location>
        <begin position="263"/>
        <end position="283"/>
    </location>
</feature>
<feature type="region of interest" description="Disordered" evidence="2">
    <location>
        <begin position="195"/>
        <end position="221"/>
    </location>
</feature>
<feature type="compositionally biased region" description="Polar residues" evidence="2">
    <location>
        <begin position="195"/>
        <end position="214"/>
    </location>
</feature>
<feature type="sequence conflict" description="In Ref. 1; BAA13897." evidence="4" ref="1">
    <original>T</original>
    <variation>S</variation>
    <location>
        <position position="340"/>
    </location>
</feature>
<reference key="1">
    <citation type="journal article" date="1997" name="DNA Res.">
        <title>Identification of open reading frames in Schizosaccharomyces pombe cDNAs.</title>
        <authorList>
            <person name="Yoshioka S."/>
            <person name="Kato K."/>
            <person name="Nakai K."/>
            <person name="Okayama H."/>
            <person name="Nojima H."/>
        </authorList>
    </citation>
    <scope>NUCLEOTIDE SEQUENCE [LARGE SCALE MRNA]</scope>
    <source>
        <strain>PR745</strain>
    </source>
</reference>
<reference key="2">
    <citation type="journal article" date="2002" name="Nature">
        <title>The genome sequence of Schizosaccharomyces pombe.</title>
        <authorList>
            <person name="Wood V."/>
            <person name="Gwilliam R."/>
            <person name="Rajandream M.A."/>
            <person name="Lyne M.H."/>
            <person name="Lyne R."/>
            <person name="Stewart A."/>
            <person name="Sgouros J.G."/>
            <person name="Peat N."/>
            <person name="Hayles J."/>
            <person name="Baker S.G."/>
            <person name="Basham D."/>
            <person name="Bowman S."/>
            <person name="Brooks K."/>
            <person name="Brown D."/>
            <person name="Brown S."/>
            <person name="Chillingworth T."/>
            <person name="Churcher C.M."/>
            <person name="Collins M."/>
            <person name="Connor R."/>
            <person name="Cronin A."/>
            <person name="Davis P."/>
            <person name="Feltwell T."/>
            <person name="Fraser A."/>
            <person name="Gentles S."/>
            <person name="Goble A."/>
            <person name="Hamlin N."/>
            <person name="Harris D.E."/>
            <person name="Hidalgo J."/>
            <person name="Hodgson G."/>
            <person name="Holroyd S."/>
            <person name="Hornsby T."/>
            <person name="Howarth S."/>
            <person name="Huckle E.J."/>
            <person name="Hunt S."/>
            <person name="Jagels K."/>
            <person name="James K.D."/>
            <person name="Jones L."/>
            <person name="Jones M."/>
            <person name="Leather S."/>
            <person name="McDonald S."/>
            <person name="McLean J."/>
            <person name="Mooney P."/>
            <person name="Moule S."/>
            <person name="Mungall K.L."/>
            <person name="Murphy L.D."/>
            <person name="Niblett D."/>
            <person name="Odell C."/>
            <person name="Oliver K."/>
            <person name="O'Neil S."/>
            <person name="Pearson D."/>
            <person name="Quail M.A."/>
            <person name="Rabbinowitsch E."/>
            <person name="Rutherford K.M."/>
            <person name="Rutter S."/>
            <person name="Saunders D."/>
            <person name="Seeger K."/>
            <person name="Sharp S."/>
            <person name="Skelton J."/>
            <person name="Simmonds M.N."/>
            <person name="Squares R."/>
            <person name="Squares S."/>
            <person name="Stevens K."/>
            <person name="Taylor K."/>
            <person name="Taylor R.G."/>
            <person name="Tivey A."/>
            <person name="Walsh S.V."/>
            <person name="Warren T."/>
            <person name="Whitehead S."/>
            <person name="Woodward J.R."/>
            <person name="Volckaert G."/>
            <person name="Aert R."/>
            <person name="Robben J."/>
            <person name="Grymonprez B."/>
            <person name="Weltjens I."/>
            <person name="Vanstreels E."/>
            <person name="Rieger M."/>
            <person name="Schaefer M."/>
            <person name="Mueller-Auer S."/>
            <person name="Gabel C."/>
            <person name="Fuchs M."/>
            <person name="Duesterhoeft A."/>
            <person name="Fritzc C."/>
            <person name="Holzer E."/>
            <person name="Moestl D."/>
            <person name="Hilbert H."/>
            <person name="Borzym K."/>
            <person name="Langer I."/>
            <person name="Beck A."/>
            <person name="Lehrach H."/>
            <person name="Reinhardt R."/>
            <person name="Pohl T.M."/>
            <person name="Eger P."/>
            <person name="Zimmermann W."/>
            <person name="Wedler H."/>
            <person name="Wambutt R."/>
            <person name="Purnelle B."/>
            <person name="Goffeau A."/>
            <person name="Cadieu E."/>
            <person name="Dreano S."/>
            <person name="Gloux S."/>
            <person name="Lelaure V."/>
            <person name="Mottier S."/>
            <person name="Galibert F."/>
            <person name="Aves S.J."/>
            <person name="Xiang Z."/>
            <person name="Hunt C."/>
            <person name="Moore K."/>
            <person name="Hurst S.M."/>
            <person name="Lucas M."/>
            <person name="Rochet M."/>
            <person name="Gaillardin C."/>
            <person name="Tallada V.A."/>
            <person name="Garzon A."/>
            <person name="Thode G."/>
            <person name="Daga R.R."/>
            <person name="Cruzado L."/>
            <person name="Jimenez J."/>
            <person name="Sanchez M."/>
            <person name="del Rey F."/>
            <person name="Benito J."/>
            <person name="Dominguez A."/>
            <person name="Revuelta J.L."/>
            <person name="Moreno S."/>
            <person name="Armstrong J."/>
            <person name="Forsburg S.L."/>
            <person name="Cerutti L."/>
            <person name="Lowe T."/>
            <person name="McCombie W.R."/>
            <person name="Paulsen I."/>
            <person name="Potashkin J."/>
            <person name="Shpakovski G.V."/>
            <person name="Ussery D."/>
            <person name="Barrell B.G."/>
            <person name="Nurse P."/>
        </authorList>
    </citation>
    <scope>NUCLEOTIDE SEQUENCE [LARGE SCALE GENOMIC DNA]</scope>
    <source>
        <strain>972 / ATCC 24843</strain>
    </source>
</reference>
<reference key="3">
    <citation type="journal article" date="2002" name="J. Biol. Chem.">
        <title>A transporter in the endoplasmic reticulum of Schizosaccharomyces pombe cells mediates zinc storage and differentially affects transition metal tolerance.</title>
        <authorList>
            <person name="Clemens S."/>
            <person name="Bloss T."/>
            <person name="Vess C."/>
            <person name="Neumann D."/>
            <person name="Nies D.H."/>
            <person name="zur Nieden U."/>
        </authorList>
    </citation>
    <scope>FUNCTION</scope>
    <scope>SUBCELLULAR LOCATION</scope>
    <source>
        <strain>FY261</strain>
    </source>
</reference>
<proteinExistence type="evidence at transcript level"/>
<name>ZHF1_SCHPO</name>
<comment type="function">
    <text evidence="3">Involved in zinc homeostasis, where it plays a role in its accumulation in the endoplasmic reticulum/nucleus. Also has a role in the sequestration of cadmium into the endoplasmic reticulum.</text>
</comment>
<comment type="subcellular location">
    <subcellularLocation>
        <location evidence="3">Endoplasmic reticulum membrane</location>
        <topology evidence="3">Multi-pass membrane protein</topology>
    </subcellularLocation>
    <subcellularLocation>
        <location evidence="3">Nucleus membrane</location>
        <topology evidence="3">Multi-pass membrane protein</topology>
    </subcellularLocation>
</comment>
<comment type="similarity">
    <text evidence="4">Belongs to the cation diffusion facilitator (CDF) transporter (TC 2.A.4) family. SLC30A subfamily.</text>
</comment>
<organism>
    <name type="scientific">Schizosaccharomyces pombe (strain 972 / ATCC 24843)</name>
    <name type="common">Fission yeast</name>
    <dbReference type="NCBI Taxonomy" id="284812"/>
    <lineage>
        <taxon>Eukaryota</taxon>
        <taxon>Fungi</taxon>
        <taxon>Dikarya</taxon>
        <taxon>Ascomycota</taxon>
        <taxon>Taphrinomycotina</taxon>
        <taxon>Schizosaccharomycetes</taxon>
        <taxon>Schizosaccharomycetales</taxon>
        <taxon>Schizosaccharomycetaceae</taxon>
        <taxon>Schizosaccharomyces</taxon>
    </lineage>
</organism>
<keyword id="KW-0256">Endoplasmic reticulum</keyword>
<keyword id="KW-0406">Ion transport</keyword>
<keyword id="KW-0472">Membrane</keyword>
<keyword id="KW-0539">Nucleus</keyword>
<keyword id="KW-1185">Reference proteome</keyword>
<keyword id="KW-0812">Transmembrane</keyword>
<keyword id="KW-1133">Transmembrane helix</keyword>
<keyword id="KW-0813">Transport</keyword>
<keyword id="KW-0862">Zinc</keyword>
<keyword id="KW-0864">Zinc transport</keyword>
<gene>
    <name type="primary">zhf1</name>
    <name type="synonym">zhf</name>
    <name type="ORF">SPAC23C11.14</name>
</gene>
<evidence type="ECO:0000255" key="1"/>
<evidence type="ECO:0000256" key="2">
    <source>
        <dbReference type="SAM" id="MobiDB-lite"/>
    </source>
</evidence>
<evidence type="ECO:0000269" key="3">
    <source>
    </source>
</evidence>
<evidence type="ECO:0000305" key="4"/>